<evidence type="ECO:0000250" key="1">
    <source>
        <dbReference type="UniProtKB" id="Q9Y7D0"/>
    </source>
</evidence>
<evidence type="ECO:0000255" key="2"/>
<evidence type="ECO:0000256" key="3">
    <source>
        <dbReference type="SAM" id="MobiDB-lite"/>
    </source>
</evidence>
<evidence type="ECO:0000269" key="4">
    <source>
    </source>
</evidence>
<evidence type="ECO:0000303" key="5">
    <source>
    </source>
</evidence>
<evidence type="ECO:0000305" key="6"/>
<evidence type="ECO:0000305" key="7">
    <source>
    </source>
</evidence>
<proteinExistence type="evidence at transcript level"/>
<accession>Q0CS94</accession>
<feature type="chain" id="PRO_0000456072" description="Trans-enoyl reductase tazE">
    <location>
        <begin position="1"/>
        <end position="303"/>
    </location>
</feature>
<feature type="region of interest" description="Disordered" evidence="3">
    <location>
        <begin position="1"/>
        <end position="26"/>
    </location>
</feature>
<feature type="binding site" evidence="1">
    <location>
        <begin position="44"/>
        <end position="49"/>
    </location>
    <ligand>
        <name>NADP(+)</name>
        <dbReference type="ChEBI" id="CHEBI:58349"/>
    </ligand>
</feature>
<feature type="binding site" evidence="2">
    <location>
        <begin position="136"/>
        <end position="143"/>
    </location>
    <ligand>
        <name>substrate</name>
    </ligand>
</feature>
<feature type="binding site" evidence="1">
    <location>
        <begin position="170"/>
        <end position="173"/>
    </location>
    <ligand>
        <name>NADP(+)</name>
        <dbReference type="ChEBI" id="CHEBI:58349"/>
    </ligand>
</feature>
<feature type="binding site" evidence="1">
    <location>
        <begin position="193"/>
        <end position="196"/>
    </location>
    <ligand>
        <name>NADP(+)</name>
        <dbReference type="ChEBI" id="CHEBI:58349"/>
    </ligand>
</feature>
<feature type="binding site" evidence="1">
    <location>
        <position position="211"/>
    </location>
    <ligand>
        <name>NADP(+)</name>
        <dbReference type="ChEBI" id="CHEBI:58349"/>
    </ligand>
</feature>
<feature type="binding site" evidence="1">
    <location>
        <begin position="246"/>
        <end position="247"/>
    </location>
    <ligand>
        <name>NADP(+)</name>
        <dbReference type="ChEBI" id="CHEBI:58349"/>
    </ligand>
</feature>
<feature type="binding site" evidence="2">
    <location>
        <begin position="265"/>
        <end position="269"/>
    </location>
    <ligand>
        <name>substrate</name>
    </ligand>
</feature>
<keyword id="KW-0521">NADP</keyword>
<keyword id="KW-0547">Nucleotide-binding</keyword>
<keyword id="KW-0560">Oxidoreductase</keyword>
<keyword id="KW-1185">Reference proteome</keyword>
<reference key="1">
    <citation type="submission" date="2005-09" db="EMBL/GenBank/DDBJ databases">
        <title>Annotation of the Aspergillus terreus NIH2624 genome.</title>
        <authorList>
            <person name="Birren B.W."/>
            <person name="Lander E.S."/>
            <person name="Galagan J.E."/>
            <person name="Nusbaum C."/>
            <person name="Devon K."/>
            <person name="Henn M."/>
            <person name="Ma L.-J."/>
            <person name="Jaffe D.B."/>
            <person name="Butler J."/>
            <person name="Alvarez P."/>
            <person name="Gnerre S."/>
            <person name="Grabherr M."/>
            <person name="Kleber M."/>
            <person name="Mauceli E.W."/>
            <person name="Brockman W."/>
            <person name="Rounsley S."/>
            <person name="Young S.K."/>
            <person name="LaButti K."/>
            <person name="Pushparaj V."/>
            <person name="DeCaprio D."/>
            <person name="Crawford M."/>
            <person name="Koehrsen M."/>
            <person name="Engels R."/>
            <person name="Montgomery P."/>
            <person name="Pearson M."/>
            <person name="Howarth C."/>
            <person name="Larson L."/>
            <person name="Luoma S."/>
            <person name="White J."/>
            <person name="Alvarado L."/>
            <person name="Kodira C.D."/>
            <person name="Zeng Q."/>
            <person name="Oleary S."/>
            <person name="Yandava C."/>
            <person name="Denning D.W."/>
            <person name="Nierman W.C."/>
            <person name="Milne T."/>
            <person name="Madden K."/>
        </authorList>
    </citation>
    <scope>NUCLEOTIDE SEQUENCE [LARGE SCALE GENOMIC DNA]</scope>
    <source>
        <strain>NIH 2624 / FGSC A1156</strain>
    </source>
</reference>
<reference key="2">
    <citation type="journal article" date="2022" name="Fungal Genet. Biol.">
        <title>Characterization of a silent azaphilone biosynthesis gene cluster in Aspergillus terreus NIH 2624.</title>
        <authorList>
            <person name="Sun W.W."/>
            <person name="Li C.Y."/>
            <person name="Chiang Y.M."/>
            <person name="Lin T.S."/>
            <person name="Warren S."/>
            <person name="Chang F.R."/>
            <person name="Wang C.C.C."/>
        </authorList>
    </citation>
    <scope>FUNCTION</scope>
    <scope>INDUCTION</scope>
    <scope>PATHWAY</scope>
</reference>
<organism>
    <name type="scientific">Aspergillus terreus (strain NIH 2624 / FGSC A1156)</name>
    <dbReference type="NCBI Taxonomy" id="341663"/>
    <lineage>
        <taxon>Eukaryota</taxon>
        <taxon>Fungi</taxon>
        <taxon>Dikarya</taxon>
        <taxon>Ascomycota</taxon>
        <taxon>Pezizomycotina</taxon>
        <taxon>Eurotiomycetes</taxon>
        <taxon>Eurotiomycetidae</taxon>
        <taxon>Eurotiales</taxon>
        <taxon>Aspergillaceae</taxon>
        <taxon>Aspergillus</taxon>
        <taxon>Aspergillus subgen. Circumdati</taxon>
    </lineage>
</organism>
<protein>
    <recommendedName>
        <fullName evidence="5">Trans-enoyl reductase tazE</fullName>
        <ecNumber evidence="7">1.-.-.-</ecNumber>
    </recommendedName>
    <alternativeName>
        <fullName evidence="5">Azaphilone biosynthesis cluster protein E</fullName>
    </alternativeName>
</protein>
<dbReference type="EC" id="1.-.-.-" evidence="7"/>
<dbReference type="EMBL" id="CH476597">
    <property type="protein sequence ID" value="EAU36714.1"/>
    <property type="molecule type" value="Genomic_DNA"/>
</dbReference>
<dbReference type="RefSeq" id="XP_001212618.1">
    <property type="nucleotide sequence ID" value="XM_001212618.1"/>
</dbReference>
<dbReference type="SMR" id="Q0CS94"/>
<dbReference type="STRING" id="341663.Q0CS94"/>
<dbReference type="EnsemblFungi" id="EAU36714">
    <property type="protein sequence ID" value="EAU36714"/>
    <property type="gene ID" value="ATEG_03440"/>
</dbReference>
<dbReference type="GeneID" id="4317484"/>
<dbReference type="VEuPathDB" id="FungiDB:ATEG_03440"/>
<dbReference type="eggNOG" id="KOG1198">
    <property type="taxonomic scope" value="Eukaryota"/>
</dbReference>
<dbReference type="HOGENOM" id="CLU_026673_16_5_1"/>
<dbReference type="OMA" id="QITFNFP"/>
<dbReference type="OrthoDB" id="10257049at2759"/>
<dbReference type="Proteomes" id="UP000007963">
    <property type="component" value="Unassembled WGS sequence"/>
</dbReference>
<dbReference type="GO" id="GO:0000166">
    <property type="term" value="F:nucleotide binding"/>
    <property type="evidence" value="ECO:0007669"/>
    <property type="project" value="UniProtKB-KW"/>
</dbReference>
<dbReference type="GO" id="GO:0016651">
    <property type="term" value="F:oxidoreductase activity, acting on NAD(P)H"/>
    <property type="evidence" value="ECO:0007669"/>
    <property type="project" value="InterPro"/>
</dbReference>
<dbReference type="CDD" id="cd08249">
    <property type="entry name" value="enoyl_reductase_like"/>
    <property type="match status" value="1"/>
</dbReference>
<dbReference type="Gene3D" id="3.90.180.10">
    <property type="entry name" value="Medium-chain alcohol dehydrogenases, catalytic domain"/>
    <property type="match status" value="1"/>
</dbReference>
<dbReference type="Gene3D" id="3.40.50.720">
    <property type="entry name" value="NAD(P)-binding Rossmann-like Domain"/>
    <property type="match status" value="1"/>
</dbReference>
<dbReference type="InterPro" id="IPR013149">
    <property type="entry name" value="ADH-like_C"/>
</dbReference>
<dbReference type="InterPro" id="IPR013154">
    <property type="entry name" value="ADH-like_N"/>
</dbReference>
<dbReference type="InterPro" id="IPR011032">
    <property type="entry name" value="GroES-like_sf"/>
</dbReference>
<dbReference type="InterPro" id="IPR036291">
    <property type="entry name" value="NAD(P)-bd_dom_sf"/>
</dbReference>
<dbReference type="InterPro" id="IPR020843">
    <property type="entry name" value="PKS_ER"/>
</dbReference>
<dbReference type="InterPro" id="IPR047122">
    <property type="entry name" value="Trans-enoyl_RdTase-like"/>
</dbReference>
<dbReference type="PANTHER" id="PTHR45348">
    <property type="entry name" value="HYPOTHETICAL OXIDOREDUCTASE (EUROFUNG)"/>
    <property type="match status" value="1"/>
</dbReference>
<dbReference type="PANTHER" id="PTHR45348:SF2">
    <property type="entry name" value="ZINC-TYPE ALCOHOL DEHYDROGENASE-LIKE PROTEIN C2E1P3.01"/>
    <property type="match status" value="1"/>
</dbReference>
<dbReference type="Pfam" id="PF08240">
    <property type="entry name" value="ADH_N"/>
    <property type="match status" value="1"/>
</dbReference>
<dbReference type="Pfam" id="PF00107">
    <property type="entry name" value="ADH_zinc_N"/>
    <property type="match status" value="1"/>
</dbReference>
<dbReference type="SMART" id="SM00829">
    <property type="entry name" value="PKS_ER"/>
    <property type="match status" value="1"/>
</dbReference>
<dbReference type="SUPFAM" id="SSF50129">
    <property type="entry name" value="GroES-like"/>
    <property type="match status" value="1"/>
</dbReference>
<dbReference type="SUPFAM" id="SSF51735">
    <property type="entry name" value="NAD(P)-binding Rossmann-fold domains"/>
    <property type="match status" value="1"/>
</dbReference>
<sequence length="303" mass="32019">MTAEHDAAILPKPGGPLAVGKRATPEPGPNDVLIEVKAVALNPCDYYQRDYGMPPVPIYPAVIGGDAAGVVAKLGSSVTGGPVPGPGSRVIAFASSFYQNGSPDHGAFQKYALAQSEAVIPLPDNLSFEEGAVFPLAVLTALTAWTTIGIPLDTRYTPADKQAVLIWGASSSVGSFAVQSAKTLGFTVYATASPKHHELVKKLGADAVFDYKDSDVVSKIVDAVKKDGVYLHTAHCVVDGALQPTLDILKETKGDAFAKVAHSPVLPECHPTLDNTQITFNFPSMDEVVRTRISKLRRAVSRE</sequence>
<comment type="function">
    <text evidence="4 7">Trans-enoyl reductase; part of the gene cluster that mediates the biosynthesis of azaterrilone A and other azaphilones, a class of fungal metabolites characterized by a highly oxygenated pyrano-quinone bicyclic core and exhibiting a broad range of bioactivities (PubMed:35398258). The first step of the pathway begins with the non-reducing polyketide synthase tazA that assembles one acetyl-CoA starter unit, five malonyl-CoA units, and catalyzes a series of Claisen condensations, methylation, PT-mediated cyclization, and finally releases the first hexaketide precursor through the R-domain. The tazA product then undergoes reduction on its terminal ketone and the following pyran-ring formation by yet undetermined enzyme(s). Dehydration and enoyl reduction, possibly involving the trans-enoyl reductase tazE leads to the next intermediate. TazD is predicted as an acetyltransferase and might catalyze the acetylation steps leading to the synthesis of azaterrilone A. Azaterrilone A is not the final product of the taz pathway and both the highly reducing polyketide synthase tazB and the dual enzyme tazHJ catalyze late steps of the pathway, leading to the production of the 2 final stereoisomers that contain additional polyketide modification whose structures have still to be determined (Probable).</text>
</comment>
<comment type="pathway">
    <text evidence="7">Secondary metabolite biosynthesis.</text>
</comment>
<comment type="induction">
    <text evidence="4">Expression is positively regulated by the azaterrilone A cluster-specific transcription factor tazR.</text>
</comment>
<comment type="similarity">
    <text evidence="6">Belongs to the zinc-containing alcohol dehydrogenase family.</text>
</comment>
<gene>
    <name evidence="5" type="primary">tazE</name>
    <name type="ORF">ATEG_03440</name>
</gene>
<name>TAZE_ASPTN</name>